<organism>
    <name type="scientific">Geobacter sp. (strain M21)</name>
    <dbReference type="NCBI Taxonomy" id="443144"/>
    <lineage>
        <taxon>Bacteria</taxon>
        <taxon>Pseudomonadati</taxon>
        <taxon>Thermodesulfobacteriota</taxon>
        <taxon>Desulfuromonadia</taxon>
        <taxon>Geobacterales</taxon>
        <taxon>Geobacteraceae</taxon>
        <taxon>Geobacter</taxon>
    </lineage>
</organism>
<evidence type="ECO:0000255" key="1">
    <source>
        <dbReference type="HAMAP-Rule" id="MF_01417"/>
    </source>
</evidence>
<keyword id="KW-0210">Decarboxylase</keyword>
<keyword id="KW-0456">Lyase</keyword>
<keyword id="KW-0460">Magnesium</keyword>
<keyword id="KW-0479">Metal-binding</keyword>
<keyword id="KW-0620">Polyamine biosynthesis</keyword>
<keyword id="KW-0663">Pyridoxal phosphate</keyword>
<keyword id="KW-0745">Spermidine biosynthesis</keyword>
<protein>
    <recommendedName>
        <fullName evidence="1">Biosynthetic arginine decarboxylase</fullName>
        <shortName evidence="1">ADC</shortName>
        <ecNumber evidence="1">4.1.1.19</ecNumber>
    </recommendedName>
</protein>
<dbReference type="EC" id="4.1.1.19" evidence="1"/>
<dbReference type="EMBL" id="CP001661">
    <property type="protein sequence ID" value="ACT17369.1"/>
    <property type="molecule type" value="Genomic_DNA"/>
</dbReference>
<dbReference type="SMR" id="C6E3V4"/>
<dbReference type="STRING" id="443144.GM21_1309"/>
<dbReference type="KEGG" id="gem:GM21_1309"/>
<dbReference type="eggNOG" id="COG1166">
    <property type="taxonomic scope" value="Bacteria"/>
</dbReference>
<dbReference type="HOGENOM" id="CLU_027243_1_0_7"/>
<dbReference type="OrthoDB" id="9802658at2"/>
<dbReference type="UniPathway" id="UPA00186">
    <property type="reaction ID" value="UER00284"/>
</dbReference>
<dbReference type="GO" id="GO:0008792">
    <property type="term" value="F:arginine decarboxylase activity"/>
    <property type="evidence" value="ECO:0007669"/>
    <property type="project" value="UniProtKB-UniRule"/>
</dbReference>
<dbReference type="GO" id="GO:0046872">
    <property type="term" value="F:metal ion binding"/>
    <property type="evidence" value="ECO:0007669"/>
    <property type="project" value="UniProtKB-KW"/>
</dbReference>
<dbReference type="GO" id="GO:0006527">
    <property type="term" value="P:arginine catabolic process"/>
    <property type="evidence" value="ECO:0007669"/>
    <property type="project" value="InterPro"/>
</dbReference>
<dbReference type="GO" id="GO:0033388">
    <property type="term" value="P:putrescine biosynthetic process from arginine"/>
    <property type="evidence" value="ECO:0007669"/>
    <property type="project" value="TreeGrafter"/>
</dbReference>
<dbReference type="GO" id="GO:0008295">
    <property type="term" value="P:spermidine biosynthetic process"/>
    <property type="evidence" value="ECO:0007669"/>
    <property type="project" value="UniProtKB-UniRule"/>
</dbReference>
<dbReference type="CDD" id="cd06830">
    <property type="entry name" value="PLPDE_III_ADC"/>
    <property type="match status" value="1"/>
</dbReference>
<dbReference type="FunFam" id="1.20.58.930:FF:000002">
    <property type="entry name" value="Biosynthetic arginine decarboxylase"/>
    <property type="match status" value="1"/>
</dbReference>
<dbReference type="Gene3D" id="1.10.287.3440">
    <property type="match status" value="1"/>
</dbReference>
<dbReference type="Gene3D" id="1.20.58.930">
    <property type="match status" value="1"/>
</dbReference>
<dbReference type="Gene3D" id="3.20.20.10">
    <property type="entry name" value="Alanine racemase"/>
    <property type="match status" value="1"/>
</dbReference>
<dbReference type="Gene3D" id="2.40.37.10">
    <property type="entry name" value="Lyase, Ornithine Decarboxylase, Chain A, domain 1"/>
    <property type="match status" value="1"/>
</dbReference>
<dbReference type="HAMAP" id="MF_01417">
    <property type="entry name" value="SpeA"/>
    <property type="match status" value="1"/>
</dbReference>
<dbReference type="InterPro" id="IPR009006">
    <property type="entry name" value="Ala_racemase/Decarboxylase_C"/>
</dbReference>
<dbReference type="InterPro" id="IPR040634">
    <property type="entry name" value="Arg_decarb_HB"/>
</dbReference>
<dbReference type="InterPro" id="IPR041128">
    <property type="entry name" value="Arg_decarbox_C"/>
</dbReference>
<dbReference type="InterPro" id="IPR002985">
    <property type="entry name" value="Arg_decrbxlase"/>
</dbReference>
<dbReference type="InterPro" id="IPR022657">
    <property type="entry name" value="De-COase2_CS"/>
</dbReference>
<dbReference type="InterPro" id="IPR022644">
    <property type="entry name" value="De-COase2_N"/>
</dbReference>
<dbReference type="InterPro" id="IPR022653">
    <property type="entry name" value="De-COase2_pyr-phos_BS"/>
</dbReference>
<dbReference type="InterPro" id="IPR000183">
    <property type="entry name" value="Orn/DAP/Arg_de-COase"/>
</dbReference>
<dbReference type="InterPro" id="IPR029066">
    <property type="entry name" value="PLP-binding_barrel"/>
</dbReference>
<dbReference type="NCBIfam" id="NF003763">
    <property type="entry name" value="PRK05354.1"/>
    <property type="match status" value="1"/>
</dbReference>
<dbReference type="NCBIfam" id="TIGR01273">
    <property type="entry name" value="speA"/>
    <property type="match status" value="1"/>
</dbReference>
<dbReference type="PANTHER" id="PTHR43295">
    <property type="entry name" value="ARGININE DECARBOXYLASE"/>
    <property type="match status" value="1"/>
</dbReference>
<dbReference type="PANTHER" id="PTHR43295:SF9">
    <property type="entry name" value="BIOSYNTHETIC ARGININE DECARBOXYLASE"/>
    <property type="match status" value="1"/>
</dbReference>
<dbReference type="Pfam" id="PF17810">
    <property type="entry name" value="Arg_decarb_HB"/>
    <property type="match status" value="1"/>
</dbReference>
<dbReference type="Pfam" id="PF17944">
    <property type="entry name" value="Arg_decarbox_C"/>
    <property type="match status" value="1"/>
</dbReference>
<dbReference type="Pfam" id="PF02784">
    <property type="entry name" value="Orn_Arg_deC_N"/>
    <property type="match status" value="1"/>
</dbReference>
<dbReference type="PIRSF" id="PIRSF001336">
    <property type="entry name" value="Arg_decrbxlase"/>
    <property type="match status" value="1"/>
</dbReference>
<dbReference type="PRINTS" id="PR01180">
    <property type="entry name" value="ARGDCRBXLASE"/>
</dbReference>
<dbReference type="PRINTS" id="PR01179">
    <property type="entry name" value="ODADCRBXLASE"/>
</dbReference>
<dbReference type="SUPFAM" id="SSF50621">
    <property type="entry name" value="Alanine racemase C-terminal domain-like"/>
    <property type="match status" value="1"/>
</dbReference>
<dbReference type="SUPFAM" id="SSF51419">
    <property type="entry name" value="PLP-binding barrel"/>
    <property type="match status" value="1"/>
</dbReference>
<dbReference type="PROSITE" id="PS00878">
    <property type="entry name" value="ODR_DC_2_1"/>
    <property type="match status" value="1"/>
</dbReference>
<dbReference type="PROSITE" id="PS00879">
    <property type="entry name" value="ODR_DC_2_2"/>
    <property type="match status" value="1"/>
</dbReference>
<feature type="chain" id="PRO_1000215247" description="Biosynthetic arginine decarboxylase">
    <location>
        <begin position="1"/>
        <end position="635"/>
    </location>
</feature>
<feature type="binding site" evidence="1">
    <location>
        <begin position="282"/>
        <end position="292"/>
    </location>
    <ligand>
        <name>substrate</name>
    </ligand>
</feature>
<feature type="modified residue" description="N6-(pyridoxal phosphate)lysine" evidence="1">
    <location>
        <position position="100"/>
    </location>
</feature>
<comment type="function">
    <text evidence="1">Catalyzes the biosynthesis of agmatine from arginine.</text>
</comment>
<comment type="catalytic activity">
    <reaction evidence="1">
        <text>L-arginine + H(+) = agmatine + CO2</text>
        <dbReference type="Rhea" id="RHEA:17641"/>
        <dbReference type="ChEBI" id="CHEBI:15378"/>
        <dbReference type="ChEBI" id="CHEBI:16526"/>
        <dbReference type="ChEBI" id="CHEBI:32682"/>
        <dbReference type="ChEBI" id="CHEBI:58145"/>
        <dbReference type="EC" id="4.1.1.19"/>
    </reaction>
</comment>
<comment type="cofactor">
    <cofactor evidence="1">
        <name>Mg(2+)</name>
        <dbReference type="ChEBI" id="CHEBI:18420"/>
    </cofactor>
</comment>
<comment type="cofactor">
    <cofactor evidence="1">
        <name>pyridoxal 5'-phosphate</name>
        <dbReference type="ChEBI" id="CHEBI:597326"/>
    </cofactor>
</comment>
<comment type="pathway">
    <text evidence="1">Amine and polyamine biosynthesis; agmatine biosynthesis; agmatine from L-arginine: step 1/1.</text>
</comment>
<comment type="similarity">
    <text evidence="1">Belongs to the Orn/Lys/Arg decarboxylase class-II family. SpeA subfamily.</text>
</comment>
<reference key="1">
    <citation type="submission" date="2009-07" db="EMBL/GenBank/DDBJ databases">
        <title>Complete sequence of Geobacter sp. M21.</title>
        <authorList>
            <consortium name="US DOE Joint Genome Institute"/>
            <person name="Lucas S."/>
            <person name="Copeland A."/>
            <person name="Lapidus A."/>
            <person name="Glavina del Rio T."/>
            <person name="Dalin E."/>
            <person name="Tice H."/>
            <person name="Bruce D."/>
            <person name="Goodwin L."/>
            <person name="Pitluck S."/>
            <person name="Saunders E."/>
            <person name="Brettin T."/>
            <person name="Detter J.C."/>
            <person name="Han C."/>
            <person name="Larimer F."/>
            <person name="Land M."/>
            <person name="Hauser L."/>
            <person name="Kyrpides N."/>
            <person name="Ovchinnikova G."/>
            <person name="Lovley D."/>
        </authorList>
    </citation>
    <scope>NUCLEOTIDE SEQUENCE [LARGE SCALE GENOMIC DNA]</scope>
    <source>
        <strain>M21</strain>
    </source>
</reference>
<gene>
    <name evidence="1" type="primary">speA</name>
    <name type="ordered locus">GM21_1309</name>
</gene>
<proteinExistence type="inferred from homology"/>
<sequence length="635" mass="71705">MAKWTINDSSKIYNIDNWGAELFSINKKGNVCVHPSPNSKYSIDLKVLVDDLIKRKIKPPILLRFMNILEGRIASISRVFKNAISDNNYPAKYQTFYPIKVNQQRQVVEAIANFGKKYNIGLEVGSKPELVAAISMSTGNNLPILCNGYKDTEFIETVLFATRVGYDITIVVEKLFELEKIVEVSKRTGIVPKLGIRVKLSSKGIGKWSTSGGDDAKFGLRISELIAAIEMLKQNDMLDSVKLLHFHVGSQITKIDKIKNALIEGTRIYAEMRKLGVNLEFLDIGGGLGVDYDGSKSSYFSSVNYSLEEYANDVIYQVKNICDDAGVPCPNIISESGRATVAHYSVLVTDVLNNNTQTLMPDFESILTESEKLSPTVKKLVDIYKSIDKHSLREDYHDTIQLIQESVSLFNLGYLNMAERANAEWICSKIIRKINSIVEKMKPIPDELQNFQLSLRQTYFANFSLFQSIPDSWAIDQLFPIVPIQRLDEKPDVLTSIADITCDSDGEITSFVGENGRTKALPLHKIKVDEQYYIGFFLIGAYQEILGDMHNLFGDTNAVHITFNKKTNYKIDTVITGDATWESLKYVQYDSQEILKRVRNNLEKDVSLQKVSIEESSHFLELLDKTLQSYTYLGE</sequence>
<accession>C6E3V4</accession>
<name>SPEA_GEOSM</name>